<accession>P50413</accession>
<feature type="chain" id="PRO_0000120012" description="Thioredoxin">
    <location>
        <begin position="1"/>
        <end position="105"/>
    </location>
</feature>
<feature type="domain" description="Thioredoxin" evidence="4">
    <location>
        <begin position="2"/>
        <end position="105"/>
    </location>
</feature>
<feature type="active site" description="Nucleophile" evidence="1">
    <location>
        <position position="32"/>
    </location>
</feature>
<feature type="active site" description="Nucleophile" evidence="1">
    <location>
        <position position="35"/>
    </location>
</feature>
<feature type="site" description="Deprotonates C-terminal active site Cys" evidence="1">
    <location>
        <position position="26"/>
    </location>
</feature>
<feature type="site" description="Contributes to redox potential value" evidence="1">
    <location>
        <position position="33"/>
    </location>
</feature>
<feature type="site" description="Contributes to redox potential value" evidence="1">
    <location>
        <position position="34"/>
    </location>
</feature>
<feature type="modified residue" description="N6-acetyllysine" evidence="2">
    <location>
        <position position="3"/>
    </location>
</feature>
<feature type="modified residue" description="N6-succinyllysine" evidence="3">
    <location>
        <position position="8"/>
    </location>
</feature>
<feature type="modified residue" description="N6-acetyllysine" evidence="2">
    <location>
        <position position="39"/>
    </location>
</feature>
<feature type="modified residue" description="S-nitrosocysteine" evidence="2">
    <location>
        <position position="62"/>
    </location>
</feature>
<feature type="modified residue" description="S-nitrosocysteine" evidence="2">
    <location>
        <position position="69"/>
    </location>
</feature>
<feature type="modified residue" description="S-nitrosocysteine; alternate" evidence="2">
    <location>
        <position position="73"/>
    </location>
</feature>
<feature type="modified residue" description="N6-acetyllysine; alternate" evidence="3">
    <location>
        <position position="94"/>
    </location>
</feature>
<feature type="modified residue" description="N6-succinyllysine; alternate" evidence="3">
    <location>
        <position position="94"/>
    </location>
</feature>
<feature type="disulfide bond" description="Redox-active" evidence="4">
    <location>
        <begin position="32"/>
        <end position="35"/>
    </location>
</feature>
<feature type="disulfide bond" description="Interchain; alternate" evidence="1">
    <location>
        <position position="73"/>
    </location>
</feature>
<protein>
    <recommendedName>
        <fullName>Thioredoxin</fullName>
        <shortName>Trx</shortName>
    </recommendedName>
</protein>
<comment type="function">
    <text evidence="1">Participates in various redox reactions through the reversible oxidation of its active center dithiol to a disulfide and catalyzes dithiol-disulfide exchange reactions (By similarity). Plays a role in the reversible S-nitrosylation of cysteine residues in target proteins, and thereby contributes to the response to intracellular nitric oxide. Nitrosylates the active site Cys of CASP3 in response to nitric oxide (NO), and thereby inhibits caspase-3 activity. Induces the FOS/JUN AP-1 DNA binding activity in ionizing radiation (IR) cells through its oxidation/reduction status and stimulates AP-1 transcriptional activity (By similarity).</text>
</comment>
<comment type="subunit">
    <text evidence="1">Homodimer; disulfide-linked. Interacts with TXNIP through the redox-active site. Interacts with MAP3K5 and CASP3. Interacts with APEX1; the interaction stimulates the FOS/JUN AP-1 DNA-binding activity in a redox-dependent manner (By similarity).</text>
</comment>
<comment type="subcellular location">
    <subcellularLocation>
        <location evidence="2">Nucleus</location>
    </subcellularLocation>
    <subcellularLocation>
        <location evidence="2">Cytoplasm</location>
    </subcellularLocation>
    <subcellularLocation>
        <location evidence="2">Secreted</location>
    </subcellularLocation>
    <text evidence="2">Translocates from the cytoplasm into the nucleus after phorbol 12-myristate 13-acetate induction (PMA). Predominantly in the cytoplasm in non irradiated cells. Radiation induces translocation of TRX from the cytoplasm to the nucleus. Secreted by a leaderless secretory pathway.</text>
</comment>
<comment type="PTM">
    <text evidence="1">In the fully reduced protein, both Cys-69 and Cys-73 are nitrosylated in response to nitric oxide (NO). When two disulfide bonds are present in the protein, only Cys-73 is nitrosylated. Cys-73 can serve as donor for nitrosylation of target proteins (By similarity).</text>
</comment>
<comment type="similarity">
    <text evidence="5">Belongs to the thioredoxin family.</text>
</comment>
<sequence>MVKQIESKYAFQEALNSAGEKLVVVDFSATWCGPCKMIKPFFHSLSEKYSNVVFLEVDVDDCQDVAAECEVKCMPTFQFFKKGQKVSEFSGANKEKLEATINELI</sequence>
<keyword id="KW-0007">Acetylation</keyword>
<keyword id="KW-0010">Activator</keyword>
<keyword id="KW-0963">Cytoplasm</keyword>
<keyword id="KW-1015">Disulfide bond</keyword>
<keyword id="KW-0249">Electron transport</keyword>
<keyword id="KW-0539">Nucleus</keyword>
<keyword id="KW-0676">Redox-active center</keyword>
<keyword id="KW-1185">Reference proteome</keyword>
<keyword id="KW-0702">S-nitrosylation</keyword>
<keyword id="KW-0964">Secreted</keyword>
<keyword id="KW-0804">Transcription</keyword>
<keyword id="KW-0805">Transcription regulation</keyword>
<keyword id="KW-0813">Transport</keyword>
<organism>
    <name type="scientific">Ovis aries</name>
    <name type="common">Sheep</name>
    <dbReference type="NCBI Taxonomy" id="9940"/>
    <lineage>
        <taxon>Eukaryota</taxon>
        <taxon>Metazoa</taxon>
        <taxon>Chordata</taxon>
        <taxon>Craniata</taxon>
        <taxon>Vertebrata</taxon>
        <taxon>Euteleostomi</taxon>
        <taxon>Mammalia</taxon>
        <taxon>Eutheria</taxon>
        <taxon>Laurasiatheria</taxon>
        <taxon>Artiodactyla</taxon>
        <taxon>Ruminantia</taxon>
        <taxon>Pecora</taxon>
        <taxon>Bovidae</taxon>
        <taxon>Caprinae</taxon>
        <taxon>Ovis</taxon>
    </lineage>
</organism>
<proteinExistence type="inferred from homology"/>
<gene>
    <name type="primary">TXN</name>
</gene>
<dbReference type="EMBL" id="Z25864">
    <property type="protein sequence ID" value="CAA81083.1"/>
    <property type="molecule type" value="mRNA"/>
</dbReference>
<dbReference type="RefSeq" id="NP_001009421.1">
    <property type="nucleotide sequence ID" value="NM_001009421.1"/>
</dbReference>
<dbReference type="SMR" id="P50413"/>
<dbReference type="STRING" id="9940.ENSOARP00000007408"/>
<dbReference type="PaxDb" id="9940-ENSOARP00000007408"/>
<dbReference type="Ensembl" id="ENSOART00025030235">
    <property type="protein sequence ID" value="ENSOARP00025014981"/>
    <property type="gene ID" value="ENSOARG00025018360"/>
</dbReference>
<dbReference type="Ensembl" id="ENSOART00040021050">
    <property type="protein sequence ID" value="ENSOARP00040010243"/>
    <property type="gene ID" value="ENSOARG00040012992"/>
</dbReference>
<dbReference type="Ensembl" id="ENSOART00180014094">
    <property type="protein sequence ID" value="ENSOARP00180007482"/>
    <property type="gene ID" value="ENSOARG00180008491"/>
</dbReference>
<dbReference type="Ensembl" id="ENSOART00185011272">
    <property type="protein sequence ID" value="ENSOARP00185005515"/>
    <property type="gene ID" value="ENSOARG00185007009"/>
</dbReference>
<dbReference type="Ensembl" id="ENSOART00215087507">
    <property type="protein sequence ID" value="ENSOARP00215047974"/>
    <property type="gene ID" value="ENSOARG00215051637"/>
</dbReference>
<dbReference type="Ensembl" id="ENSOART00220005306">
    <property type="protein sequence ID" value="ENSOARP00220003654"/>
    <property type="gene ID" value="ENSOARG00220002901"/>
</dbReference>
<dbReference type="Ensembl" id="ENSOART00225067597">
    <property type="protein sequence ID" value="ENSOARP00225034397"/>
    <property type="gene ID" value="ENSOARG00225040756"/>
</dbReference>
<dbReference type="Ensembl" id="ENSOART00260042689">
    <property type="protein sequence ID" value="ENSOARP00260021922"/>
    <property type="gene ID" value="ENSOARG00260025939"/>
</dbReference>
<dbReference type="GeneID" id="443439"/>
<dbReference type="KEGG" id="oas:443439"/>
<dbReference type="CTD" id="7295"/>
<dbReference type="eggNOG" id="KOG0907">
    <property type="taxonomic scope" value="Eukaryota"/>
</dbReference>
<dbReference type="HOGENOM" id="CLU_090389_14_6_1"/>
<dbReference type="OMA" id="CYADWCS"/>
<dbReference type="OrthoDB" id="2121326at2759"/>
<dbReference type="Proteomes" id="UP000002356">
    <property type="component" value="Chromosome 2"/>
</dbReference>
<dbReference type="Bgee" id="ENSOARG00000006916">
    <property type="expression patterns" value="Expressed in caecum and 54 other cell types or tissues"/>
</dbReference>
<dbReference type="GO" id="GO:0005737">
    <property type="term" value="C:cytoplasm"/>
    <property type="evidence" value="ECO:0007669"/>
    <property type="project" value="UniProtKB-SubCell"/>
</dbReference>
<dbReference type="GO" id="GO:0005576">
    <property type="term" value="C:extracellular region"/>
    <property type="evidence" value="ECO:0007669"/>
    <property type="project" value="UniProtKB-SubCell"/>
</dbReference>
<dbReference type="GO" id="GO:0005634">
    <property type="term" value="C:nucleus"/>
    <property type="evidence" value="ECO:0007669"/>
    <property type="project" value="UniProtKB-SubCell"/>
</dbReference>
<dbReference type="GO" id="GO:0015035">
    <property type="term" value="F:protein-disulfide reductase activity"/>
    <property type="evidence" value="ECO:0007669"/>
    <property type="project" value="InterPro"/>
</dbReference>
<dbReference type="GO" id="GO:0043388">
    <property type="term" value="P:positive regulation of DNA binding"/>
    <property type="evidence" value="ECO:0000250"/>
    <property type="project" value="UniProtKB"/>
</dbReference>
<dbReference type="GO" id="GO:0009314">
    <property type="term" value="P:response to radiation"/>
    <property type="evidence" value="ECO:0000250"/>
    <property type="project" value="UniProtKB"/>
</dbReference>
<dbReference type="CDD" id="cd02947">
    <property type="entry name" value="TRX_family"/>
    <property type="match status" value="1"/>
</dbReference>
<dbReference type="FunFam" id="3.40.30.10:FF:000130">
    <property type="entry name" value="Thioredoxin"/>
    <property type="match status" value="1"/>
</dbReference>
<dbReference type="Gene3D" id="3.40.30.10">
    <property type="entry name" value="Glutaredoxin"/>
    <property type="match status" value="1"/>
</dbReference>
<dbReference type="InterPro" id="IPR005746">
    <property type="entry name" value="Thioredoxin"/>
</dbReference>
<dbReference type="InterPro" id="IPR036249">
    <property type="entry name" value="Thioredoxin-like_sf"/>
</dbReference>
<dbReference type="InterPro" id="IPR017937">
    <property type="entry name" value="Thioredoxin_CS"/>
</dbReference>
<dbReference type="InterPro" id="IPR013766">
    <property type="entry name" value="Thioredoxin_domain"/>
</dbReference>
<dbReference type="PANTHER" id="PTHR46115">
    <property type="entry name" value="THIOREDOXIN-LIKE PROTEIN 1"/>
    <property type="match status" value="1"/>
</dbReference>
<dbReference type="Pfam" id="PF00085">
    <property type="entry name" value="Thioredoxin"/>
    <property type="match status" value="1"/>
</dbReference>
<dbReference type="PIRSF" id="PIRSF000077">
    <property type="entry name" value="Thioredoxin"/>
    <property type="match status" value="1"/>
</dbReference>
<dbReference type="PRINTS" id="PR00421">
    <property type="entry name" value="THIOREDOXIN"/>
</dbReference>
<dbReference type="SUPFAM" id="SSF52833">
    <property type="entry name" value="Thioredoxin-like"/>
    <property type="match status" value="1"/>
</dbReference>
<dbReference type="PROSITE" id="PS00194">
    <property type="entry name" value="THIOREDOXIN_1"/>
    <property type="match status" value="1"/>
</dbReference>
<dbReference type="PROSITE" id="PS51352">
    <property type="entry name" value="THIOREDOXIN_2"/>
    <property type="match status" value="1"/>
</dbReference>
<evidence type="ECO:0000250" key="1"/>
<evidence type="ECO:0000250" key="2">
    <source>
        <dbReference type="UniProtKB" id="P10599"/>
    </source>
</evidence>
<evidence type="ECO:0000250" key="3">
    <source>
        <dbReference type="UniProtKB" id="P10639"/>
    </source>
</evidence>
<evidence type="ECO:0000255" key="4">
    <source>
        <dbReference type="PROSITE-ProRule" id="PRU00691"/>
    </source>
</evidence>
<evidence type="ECO:0000305" key="5"/>
<name>THIO_SHEEP</name>
<reference key="1">
    <citation type="journal article" date="1994" name="DNA Seq.">
        <title>Nucleotide sequence of ovine thioredoxin cDNA.</title>
        <authorList>
            <person name="Droogmans L."/>
            <person name="Cleuter Y."/>
            <person name="Wollman E.E."/>
            <person name="Kettmann R."/>
            <person name="Burny A."/>
        </authorList>
    </citation>
    <scope>NUCLEOTIDE SEQUENCE [MRNA]</scope>
</reference>